<name>TOLL_DROME</name>
<protein>
    <recommendedName>
        <fullName>Protein toll</fullName>
    </recommendedName>
</protein>
<organism>
    <name type="scientific">Drosophila melanogaster</name>
    <name type="common">Fruit fly</name>
    <dbReference type="NCBI Taxonomy" id="7227"/>
    <lineage>
        <taxon>Eukaryota</taxon>
        <taxon>Metazoa</taxon>
        <taxon>Ecdysozoa</taxon>
        <taxon>Arthropoda</taxon>
        <taxon>Hexapoda</taxon>
        <taxon>Insecta</taxon>
        <taxon>Pterygota</taxon>
        <taxon>Neoptera</taxon>
        <taxon>Endopterygota</taxon>
        <taxon>Diptera</taxon>
        <taxon>Brachycera</taxon>
        <taxon>Muscomorpha</taxon>
        <taxon>Ephydroidea</taxon>
        <taxon>Drosophilidae</taxon>
        <taxon>Drosophila</taxon>
        <taxon>Sophophora</taxon>
    </lineage>
</organism>
<keyword id="KW-0002">3D-structure</keyword>
<keyword id="KW-0130">Cell adhesion</keyword>
<keyword id="KW-1003">Cell membrane</keyword>
<keyword id="KW-0963">Cytoplasm</keyword>
<keyword id="KW-0217">Developmental protein</keyword>
<keyword id="KW-1015">Disulfide bond</keyword>
<keyword id="KW-0325">Glycoprotein</keyword>
<keyword id="KW-0391">Immunity</keyword>
<keyword id="KW-0399">Innate immunity</keyword>
<keyword id="KW-0433">Leucine-rich repeat</keyword>
<keyword id="KW-0472">Membrane</keyword>
<keyword id="KW-0520">NAD</keyword>
<keyword id="KW-0675">Receptor</keyword>
<keyword id="KW-1185">Reference proteome</keyword>
<keyword id="KW-0677">Repeat</keyword>
<keyword id="KW-0732">Signal</keyword>
<keyword id="KW-0812">Transmembrane</keyword>
<keyword id="KW-1133">Transmembrane helix</keyword>
<dbReference type="EMBL" id="M19969">
    <property type="protein sequence ID" value="AAA28941.1"/>
    <property type="molecule type" value="mRNA"/>
</dbReference>
<dbReference type="EMBL" id="AE014297">
    <property type="protein sequence ID" value="AAF56624.1"/>
    <property type="molecule type" value="Genomic_DNA"/>
</dbReference>
<dbReference type="EMBL" id="AE014297">
    <property type="protein sequence ID" value="AAN14086.1"/>
    <property type="molecule type" value="Genomic_DNA"/>
</dbReference>
<dbReference type="EMBL" id="BT031153">
    <property type="protein sequence ID" value="ABX00775.1"/>
    <property type="molecule type" value="mRNA"/>
</dbReference>
<dbReference type="EMBL" id="AY349649">
    <property type="protein sequence ID" value="AAQ64932.1"/>
    <property type="molecule type" value="Genomic_DNA"/>
</dbReference>
<dbReference type="EMBL" id="AY349650">
    <property type="protein sequence ID" value="AAQ64933.1"/>
    <property type="molecule type" value="Genomic_DNA"/>
</dbReference>
<dbReference type="EMBL" id="AY349651">
    <property type="protein sequence ID" value="AAQ64934.1"/>
    <property type="molecule type" value="Genomic_DNA"/>
</dbReference>
<dbReference type="EMBL" id="AY349652">
    <property type="protein sequence ID" value="AAQ64935.1"/>
    <property type="molecule type" value="Genomic_DNA"/>
</dbReference>
<dbReference type="EMBL" id="AY349653">
    <property type="protein sequence ID" value="AAQ64936.1"/>
    <property type="molecule type" value="Genomic_DNA"/>
</dbReference>
<dbReference type="EMBL" id="AY349654">
    <property type="protein sequence ID" value="AAQ64937.1"/>
    <property type="molecule type" value="Genomic_DNA"/>
</dbReference>
<dbReference type="EMBL" id="AY349655">
    <property type="protein sequence ID" value="AAQ64938.1"/>
    <property type="molecule type" value="Genomic_DNA"/>
</dbReference>
<dbReference type="EMBL" id="AY121616">
    <property type="protein sequence ID" value="AAM51943.1"/>
    <property type="molecule type" value="mRNA"/>
</dbReference>
<dbReference type="PIR" id="A29943">
    <property type="entry name" value="A29943"/>
</dbReference>
<dbReference type="RefSeq" id="NP_524518.1">
    <property type="nucleotide sequence ID" value="NM_079794.3"/>
</dbReference>
<dbReference type="RefSeq" id="NP_733166.1">
    <property type="nucleotide sequence ID" value="NM_170287.3"/>
</dbReference>
<dbReference type="PDB" id="4ARN">
    <property type="method" value="X-ray"/>
    <property type="resolution" value="2.41 A"/>
    <property type="chains" value="A/B/C/D=28-228"/>
</dbReference>
<dbReference type="PDB" id="4ARR">
    <property type="method" value="X-ray"/>
    <property type="resolution" value="3.00 A"/>
    <property type="chains" value="A/B=28-228"/>
</dbReference>
<dbReference type="PDB" id="4BV4">
    <property type="method" value="X-ray"/>
    <property type="resolution" value="2.35 A"/>
    <property type="chains" value="R=28-397"/>
</dbReference>
<dbReference type="PDB" id="4LXR">
    <property type="method" value="X-ray"/>
    <property type="resolution" value="2.20 A"/>
    <property type="chains" value="A=28-802"/>
</dbReference>
<dbReference type="PDB" id="4LXS">
    <property type="method" value="X-ray"/>
    <property type="resolution" value="3.30 A"/>
    <property type="chains" value="A=28-802"/>
</dbReference>
<dbReference type="PDBsum" id="4ARN"/>
<dbReference type="PDBsum" id="4ARR"/>
<dbReference type="PDBsum" id="4BV4"/>
<dbReference type="PDBsum" id="4LXR"/>
<dbReference type="PDBsum" id="4LXS"/>
<dbReference type="SMR" id="P08953"/>
<dbReference type="BioGRID" id="68116">
    <property type="interactions" value="34"/>
</dbReference>
<dbReference type="DIP" id="DIP-34358N"/>
<dbReference type="FunCoup" id="P08953">
    <property type="interactions" value="119"/>
</dbReference>
<dbReference type="IntAct" id="P08953">
    <property type="interactions" value="4"/>
</dbReference>
<dbReference type="MINT" id="P08953"/>
<dbReference type="STRING" id="7227.FBpp0303187"/>
<dbReference type="GlyCosmos" id="P08953">
    <property type="glycosylation" value="17 sites, No reported glycans"/>
</dbReference>
<dbReference type="GlyGen" id="P08953">
    <property type="glycosylation" value="18 sites"/>
</dbReference>
<dbReference type="iPTMnet" id="P08953"/>
<dbReference type="PaxDb" id="7227-FBpp0084431"/>
<dbReference type="EnsemblMetazoa" id="FBtr0085059">
    <property type="protein sequence ID" value="FBpp0084431"/>
    <property type="gene ID" value="FBgn0262473"/>
</dbReference>
<dbReference type="EnsemblMetazoa" id="FBtr0330155">
    <property type="protein sequence ID" value="FBpp0303188"/>
    <property type="gene ID" value="FBgn0262473"/>
</dbReference>
<dbReference type="GeneID" id="43222"/>
<dbReference type="KEGG" id="dme:Dmel_CG5490"/>
<dbReference type="AGR" id="FB:FBgn0262473"/>
<dbReference type="CTD" id="109651"/>
<dbReference type="FlyBase" id="FBgn0262473">
    <property type="gene designation" value="Tl"/>
</dbReference>
<dbReference type="VEuPathDB" id="VectorBase:FBgn0262473"/>
<dbReference type="eggNOG" id="KOG4641">
    <property type="taxonomic scope" value="Eukaryota"/>
</dbReference>
<dbReference type="HOGENOM" id="CLU_009970_0_0_1"/>
<dbReference type="InParanoid" id="P08953"/>
<dbReference type="OMA" id="EYELNCP"/>
<dbReference type="OrthoDB" id="1421090at2759"/>
<dbReference type="PhylomeDB" id="P08953"/>
<dbReference type="Reactome" id="R-DME-168142">
    <property type="pathway name" value="Toll Like Receptor 10 (TLR10) Cascade"/>
</dbReference>
<dbReference type="Reactome" id="R-DME-209442">
    <property type="pathway name" value="Formation of the trans-membrane 'signalling complex'"/>
</dbReference>
<dbReference type="Reactome" id="R-DME-214842">
    <property type="pathway name" value="DL and DIF homodimers bind to TUB and phosphorylated PLL in the TL receptor 'signalling complex'"/>
</dbReference>
<dbReference type="Reactome" id="R-DME-214844">
    <property type="pathway name" value="DL and DIF homodimers complexed with CACT are all phosphorylated in the TL receptor 'signalling complex'"/>
</dbReference>
<dbReference type="Reactome" id="R-DME-214862">
    <property type="pathway name" value="Activated PLL kinase is autophosphorylated in the TL receptor 'signalling complex'"/>
</dbReference>
<dbReference type="Reactome" id="R-DME-214863">
    <property type="pathway name" value="Adaptor protein complex binds to TL receptor at the plasma membrane"/>
</dbReference>
<dbReference type="Reactome" id="R-DME-214869">
    <property type="pathway name" value="Phosphorylated CACT, DL and DIF homodimers dissociate from the TL receptor 'signalling complex'"/>
</dbReference>
<dbReference type="Reactome" id="R-DME-214874">
    <property type="pathway name" value="PLL kinase binds to TUB in the TL receptor 'signalling complex'"/>
</dbReference>
<dbReference type="Reactome" id="R-DME-6798695">
    <property type="pathway name" value="Neutrophil degranulation"/>
</dbReference>
<dbReference type="SignaLink" id="P08953"/>
<dbReference type="BioGRID-ORCS" id="43222">
    <property type="hits" value="0 hits in 1 CRISPR screen"/>
</dbReference>
<dbReference type="ChiTaRS" id="Tl">
    <property type="organism name" value="fly"/>
</dbReference>
<dbReference type="EvolutionaryTrace" id="P08953"/>
<dbReference type="GenomeRNAi" id="43222"/>
<dbReference type="PRO" id="PR:P08953"/>
<dbReference type="Proteomes" id="UP000000803">
    <property type="component" value="Chromosome 3R"/>
</dbReference>
<dbReference type="Bgee" id="FBgn0262473">
    <property type="expression patterns" value="Expressed in cleaving embryo and 229 other cell types or tissues"/>
</dbReference>
<dbReference type="ExpressionAtlas" id="P08953">
    <property type="expression patterns" value="baseline and differential"/>
</dbReference>
<dbReference type="GO" id="GO:0009986">
    <property type="term" value="C:cell surface"/>
    <property type="evidence" value="ECO:0000314"/>
    <property type="project" value="UniProtKB"/>
</dbReference>
<dbReference type="GO" id="GO:0032154">
    <property type="term" value="C:cleavage furrow"/>
    <property type="evidence" value="ECO:0000314"/>
    <property type="project" value="UniProtKB"/>
</dbReference>
<dbReference type="GO" id="GO:0005769">
    <property type="term" value="C:early endosome"/>
    <property type="evidence" value="ECO:0000314"/>
    <property type="project" value="FlyBase"/>
</dbReference>
<dbReference type="GO" id="GO:0009897">
    <property type="term" value="C:external side of plasma membrane"/>
    <property type="evidence" value="ECO:0000314"/>
    <property type="project" value="FlyBase"/>
</dbReference>
<dbReference type="GO" id="GO:0005886">
    <property type="term" value="C:plasma membrane"/>
    <property type="evidence" value="ECO:0000314"/>
    <property type="project" value="UniProtKB"/>
</dbReference>
<dbReference type="GO" id="GO:0019955">
    <property type="term" value="F:cytokine binding"/>
    <property type="evidence" value="ECO:0000353"/>
    <property type="project" value="FlyBase"/>
</dbReference>
<dbReference type="GO" id="GO:0004896">
    <property type="term" value="F:cytokine receptor activity"/>
    <property type="evidence" value="ECO:0000315"/>
    <property type="project" value="FlyBase"/>
</dbReference>
<dbReference type="GO" id="GO:0042802">
    <property type="term" value="F:identical protein binding"/>
    <property type="evidence" value="ECO:0000353"/>
    <property type="project" value="IntAct"/>
</dbReference>
<dbReference type="GO" id="GO:0061809">
    <property type="term" value="F:NAD+ nucleosidase activity, cyclic ADP-ribose generating"/>
    <property type="evidence" value="ECO:0007669"/>
    <property type="project" value="UniProtKB-EC"/>
</dbReference>
<dbReference type="GO" id="GO:0038023">
    <property type="term" value="F:signaling receptor activity"/>
    <property type="evidence" value="ECO:0000318"/>
    <property type="project" value="GO_Central"/>
</dbReference>
<dbReference type="GO" id="GO:0070976">
    <property type="term" value="F:TIR domain binding"/>
    <property type="evidence" value="ECO:0000353"/>
    <property type="project" value="FlyBase"/>
</dbReference>
<dbReference type="GO" id="GO:0004888">
    <property type="term" value="F:transmembrane signaling receptor activity"/>
    <property type="evidence" value="ECO:0000314"/>
    <property type="project" value="FlyBase"/>
</dbReference>
<dbReference type="GO" id="GO:0046790">
    <property type="term" value="F:virion binding"/>
    <property type="evidence" value="ECO:0000314"/>
    <property type="project" value="FlyBase"/>
</dbReference>
<dbReference type="GO" id="GO:0061760">
    <property type="term" value="P:antifungal innate immune response"/>
    <property type="evidence" value="ECO:0000314"/>
    <property type="project" value="FlyBase"/>
</dbReference>
<dbReference type="GO" id="GO:0007155">
    <property type="term" value="P:cell adhesion"/>
    <property type="evidence" value="ECO:0007669"/>
    <property type="project" value="UniProtKB-KW"/>
</dbReference>
<dbReference type="GO" id="GO:0035212">
    <property type="term" value="P:cell competition in a multicellular organism"/>
    <property type="evidence" value="ECO:0000315"/>
    <property type="project" value="FlyBase"/>
</dbReference>
<dbReference type="GO" id="GO:0050830">
    <property type="term" value="P:defense response to Gram-positive bacterium"/>
    <property type="evidence" value="ECO:0000314"/>
    <property type="project" value="FlyBase"/>
</dbReference>
<dbReference type="GO" id="GO:0002229">
    <property type="term" value="P:defense response to oomycetes"/>
    <property type="evidence" value="ECO:0000315"/>
    <property type="project" value="FlyBase"/>
</dbReference>
<dbReference type="GO" id="GO:0009597">
    <property type="term" value="P:detection of virus"/>
    <property type="evidence" value="ECO:0000314"/>
    <property type="project" value="FlyBase"/>
</dbReference>
<dbReference type="GO" id="GO:0009950">
    <property type="term" value="P:dorsal/ventral axis specification"/>
    <property type="evidence" value="ECO:0000315"/>
    <property type="project" value="UniProtKB"/>
</dbReference>
<dbReference type="GO" id="GO:0007507">
    <property type="term" value="P:heart development"/>
    <property type="evidence" value="ECO:0000315"/>
    <property type="project" value="FlyBase"/>
</dbReference>
<dbReference type="GO" id="GO:0045087">
    <property type="term" value="P:innate immune response"/>
    <property type="evidence" value="ECO:0000314"/>
    <property type="project" value="FlyBase"/>
</dbReference>
<dbReference type="GO" id="GO:0007526">
    <property type="term" value="P:larval somatic muscle development"/>
    <property type="evidence" value="ECO:0000315"/>
    <property type="project" value="FlyBase"/>
</dbReference>
<dbReference type="GO" id="GO:0030308">
    <property type="term" value="P:negative regulation of cell growth"/>
    <property type="evidence" value="ECO:0000315"/>
    <property type="project" value="FlyBase"/>
</dbReference>
<dbReference type="GO" id="GO:0046627">
    <property type="term" value="P:negative regulation of insulin receptor signaling pathway"/>
    <property type="evidence" value="ECO:0000315"/>
    <property type="project" value="FlyBase"/>
</dbReference>
<dbReference type="GO" id="GO:0040015">
    <property type="term" value="P:negative regulation of multicellular organism growth"/>
    <property type="evidence" value="ECO:0000315"/>
    <property type="project" value="FlyBase"/>
</dbReference>
<dbReference type="GO" id="GO:0002804">
    <property type="term" value="P:positive regulation of antifungal peptide production"/>
    <property type="evidence" value="ECO:0000314"/>
    <property type="project" value="FlyBase"/>
</dbReference>
<dbReference type="GO" id="GO:0002225">
    <property type="term" value="P:positive regulation of antimicrobial peptide production"/>
    <property type="evidence" value="ECO:0000315"/>
    <property type="project" value="FlyBase"/>
</dbReference>
<dbReference type="GO" id="GO:0035208">
    <property type="term" value="P:positive regulation of hemocyte proliferation"/>
    <property type="evidence" value="ECO:0000315"/>
    <property type="project" value="FlyBase"/>
</dbReference>
<dbReference type="GO" id="GO:0045944">
    <property type="term" value="P:positive regulation of transcription by RNA polymerase II"/>
    <property type="evidence" value="ECO:0000315"/>
    <property type="project" value="FlyBase"/>
</dbReference>
<dbReference type="GO" id="GO:1902875">
    <property type="term" value="P:regulation of embryonic pattern specification"/>
    <property type="evidence" value="ECO:0000315"/>
    <property type="project" value="UniProtKB"/>
</dbReference>
<dbReference type="GO" id="GO:0002347">
    <property type="term" value="P:response to tumor cell"/>
    <property type="evidence" value="ECO:0000315"/>
    <property type="project" value="FlyBase"/>
</dbReference>
<dbReference type="GO" id="GO:0009611">
    <property type="term" value="P:response to wounding"/>
    <property type="evidence" value="ECO:0000314"/>
    <property type="project" value="FlyBase"/>
</dbReference>
<dbReference type="GO" id="GO:0007165">
    <property type="term" value="P:signal transduction"/>
    <property type="evidence" value="ECO:0000318"/>
    <property type="project" value="GO_Central"/>
</dbReference>
<dbReference type="GO" id="GO:0007416">
    <property type="term" value="P:synapse assembly"/>
    <property type="evidence" value="ECO:0000315"/>
    <property type="project" value="FlyBase"/>
</dbReference>
<dbReference type="GO" id="GO:0016201">
    <property type="term" value="P:synaptic target inhibition"/>
    <property type="evidence" value="ECO:0000315"/>
    <property type="project" value="FlyBase"/>
</dbReference>
<dbReference type="GO" id="GO:0008063">
    <property type="term" value="P:Toll signaling pathway"/>
    <property type="evidence" value="ECO:0000314"/>
    <property type="project" value="FlyBase"/>
</dbReference>
<dbReference type="FunFam" id="3.40.50.10140:FF:000020">
    <property type="entry name" value="Blast:Protein toll"/>
    <property type="match status" value="1"/>
</dbReference>
<dbReference type="FunFam" id="3.80.10.10:FF:000391">
    <property type="entry name" value="Protein toll"/>
    <property type="match status" value="1"/>
</dbReference>
<dbReference type="FunFam" id="3.80.10.10:FF:001212">
    <property type="entry name" value="Protein toll"/>
    <property type="match status" value="1"/>
</dbReference>
<dbReference type="Gene3D" id="3.80.10.10">
    <property type="entry name" value="Ribonuclease Inhibitor"/>
    <property type="match status" value="3"/>
</dbReference>
<dbReference type="Gene3D" id="3.40.50.10140">
    <property type="entry name" value="Toll/interleukin-1 receptor homology (TIR) domain"/>
    <property type="match status" value="1"/>
</dbReference>
<dbReference type="InterPro" id="IPR000483">
    <property type="entry name" value="Cys-rich_flank_reg_C"/>
</dbReference>
<dbReference type="InterPro" id="IPR001611">
    <property type="entry name" value="Leu-rich_rpt"/>
</dbReference>
<dbReference type="InterPro" id="IPR003591">
    <property type="entry name" value="Leu-rich_rpt_typical-subtyp"/>
</dbReference>
<dbReference type="InterPro" id="IPR026906">
    <property type="entry name" value="LRR_5"/>
</dbReference>
<dbReference type="InterPro" id="IPR032675">
    <property type="entry name" value="LRR_dom_sf"/>
</dbReference>
<dbReference type="InterPro" id="IPR000372">
    <property type="entry name" value="LRRNT"/>
</dbReference>
<dbReference type="InterPro" id="IPR000157">
    <property type="entry name" value="TIR_dom"/>
</dbReference>
<dbReference type="InterPro" id="IPR035897">
    <property type="entry name" value="Toll_tir_struct_dom_sf"/>
</dbReference>
<dbReference type="PANTHER" id="PTHR24365:SF541">
    <property type="entry name" value="PROTEIN TOLL-RELATED"/>
    <property type="match status" value="1"/>
</dbReference>
<dbReference type="PANTHER" id="PTHR24365">
    <property type="entry name" value="TOLL-LIKE RECEPTOR"/>
    <property type="match status" value="1"/>
</dbReference>
<dbReference type="Pfam" id="PF00560">
    <property type="entry name" value="LRR_1"/>
    <property type="match status" value="2"/>
</dbReference>
<dbReference type="Pfam" id="PF13306">
    <property type="entry name" value="LRR_5"/>
    <property type="match status" value="1"/>
</dbReference>
<dbReference type="Pfam" id="PF13855">
    <property type="entry name" value="LRR_8"/>
    <property type="match status" value="1"/>
</dbReference>
<dbReference type="Pfam" id="PF01463">
    <property type="entry name" value="LRRCT"/>
    <property type="match status" value="1"/>
</dbReference>
<dbReference type="Pfam" id="PF01462">
    <property type="entry name" value="LRRNT"/>
    <property type="match status" value="1"/>
</dbReference>
<dbReference type="Pfam" id="PF01582">
    <property type="entry name" value="TIR"/>
    <property type="match status" value="1"/>
</dbReference>
<dbReference type="PRINTS" id="PR01537">
    <property type="entry name" value="INTRLKN1R1F"/>
</dbReference>
<dbReference type="PRINTS" id="PR00019">
    <property type="entry name" value="LEURICHRPT"/>
</dbReference>
<dbReference type="SMART" id="SM00369">
    <property type="entry name" value="LRR_TYP"/>
    <property type="match status" value="11"/>
</dbReference>
<dbReference type="SMART" id="SM00082">
    <property type="entry name" value="LRRCT"/>
    <property type="match status" value="2"/>
</dbReference>
<dbReference type="SMART" id="SM00013">
    <property type="entry name" value="LRRNT"/>
    <property type="match status" value="1"/>
</dbReference>
<dbReference type="SMART" id="SM00255">
    <property type="entry name" value="TIR"/>
    <property type="match status" value="1"/>
</dbReference>
<dbReference type="SUPFAM" id="SSF52058">
    <property type="entry name" value="L domain-like"/>
    <property type="match status" value="3"/>
</dbReference>
<dbReference type="SUPFAM" id="SSF52200">
    <property type="entry name" value="Toll/Interleukin receptor TIR domain"/>
    <property type="match status" value="1"/>
</dbReference>
<dbReference type="PROSITE" id="PS51450">
    <property type="entry name" value="LRR"/>
    <property type="match status" value="13"/>
</dbReference>
<dbReference type="PROSITE" id="PS50104">
    <property type="entry name" value="TIR"/>
    <property type="match status" value="1"/>
</dbReference>
<reference key="1">
    <citation type="journal article" date="1988" name="Cell">
        <title>The Toll gene of Drosophila, required for dorsal-ventral embryonic polarity, appears to encode a transmembrane protein.</title>
        <authorList>
            <person name="Hashimoto C."/>
            <person name="Hudson K.L."/>
            <person name="Anderson K.V."/>
        </authorList>
    </citation>
    <scope>NUCLEOTIDE SEQUENCE [MRNA]</scope>
    <scope>FUNCTION</scope>
    <scope>DEVELOPMENTAL STAGE</scope>
</reference>
<reference key="2">
    <citation type="journal article" date="2000" name="Science">
        <title>The genome sequence of Drosophila melanogaster.</title>
        <authorList>
            <person name="Adams M.D."/>
            <person name="Celniker S.E."/>
            <person name="Holt R.A."/>
            <person name="Evans C.A."/>
            <person name="Gocayne J.D."/>
            <person name="Amanatides P.G."/>
            <person name="Scherer S.E."/>
            <person name="Li P.W."/>
            <person name="Hoskins R.A."/>
            <person name="Galle R.F."/>
            <person name="George R.A."/>
            <person name="Lewis S.E."/>
            <person name="Richards S."/>
            <person name="Ashburner M."/>
            <person name="Henderson S.N."/>
            <person name="Sutton G.G."/>
            <person name="Wortman J.R."/>
            <person name="Yandell M.D."/>
            <person name="Zhang Q."/>
            <person name="Chen L.X."/>
            <person name="Brandon R.C."/>
            <person name="Rogers Y.-H.C."/>
            <person name="Blazej R.G."/>
            <person name="Champe M."/>
            <person name="Pfeiffer B.D."/>
            <person name="Wan K.H."/>
            <person name="Doyle C."/>
            <person name="Baxter E.G."/>
            <person name="Helt G."/>
            <person name="Nelson C.R."/>
            <person name="Miklos G.L.G."/>
            <person name="Abril J.F."/>
            <person name="Agbayani A."/>
            <person name="An H.-J."/>
            <person name="Andrews-Pfannkoch C."/>
            <person name="Baldwin D."/>
            <person name="Ballew R.M."/>
            <person name="Basu A."/>
            <person name="Baxendale J."/>
            <person name="Bayraktaroglu L."/>
            <person name="Beasley E.M."/>
            <person name="Beeson K.Y."/>
            <person name="Benos P.V."/>
            <person name="Berman B.P."/>
            <person name="Bhandari D."/>
            <person name="Bolshakov S."/>
            <person name="Borkova D."/>
            <person name="Botchan M.R."/>
            <person name="Bouck J."/>
            <person name="Brokstein P."/>
            <person name="Brottier P."/>
            <person name="Burtis K.C."/>
            <person name="Busam D.A."/>
            <person name="Butler H."/>
            <person name="Cadieu E."/>
            <person name="Center A."/>
            <person name="Chandra I."/>
            <person name="Cherry J.M."/>
            <person name="Cawley S."/>
            <person name="Dahlke C."/>
            <person name="Davenport L.B."/>
            <person name="Davies P."/>
            <person name="de Pablos B."/>
            <person name="Delcher A."/>
            <person name="Deng Z."/>
            <person name="Mays A.D."/>
            <person name="Dew I."/>
            <person name="Dietz S.M."/>
            <person name="Dodson K."/>
            <person name="Doup L.E."/>
            <person name="Downes M."/>
            <person name="Dugan-Rocha S."/>
            <person name="Dunkov B.C."/>
            <person name="Dunn P."/>
            <person name="Durbin K.J."/>
            <person name="Evangelista C.C."/>
            <person name="Ferraz C."/>
            <person name="Ferriera S."/>
            <person name="Fleischmann W."/>
            <person name="Fosler C."/>
            <person name="Gabrielian A.E."/>
            <person name="Garg N.S."/>
            <person name="Gelbart W.M."/>
            <person name="Glasser K."/>
            <person name="Glodek A."/>
            <person name="Gong F."/>
            <person name="Gorrell J.H."/>
            <person name="Gu Z."/>
            <person name="Guan P."/>
            <person name="Harris M."/>
            <person name="Harris N.L."/>
            <person name="Harvey D.A."/>
            <person name="Heiman T.J."/>
            <person name="Hernandez J.R."/>
            <person name="Houck J."/>
            <person name="Hostin D."/>
            <person name="Houston K.A."/>
            <person name="Howland T.J."/>
            <person name="Wei M.-H."/>
            <person name="Ibegwam C."/>
            <person name="Jalali M."/>
            <person name="Kalush F."/>
            <person name="Karpen G.H."/>
            <person name="Ke Z."/>
            <person name="Kennison J.A."/>
            <person name="Ketchum K.A."/>
            <person name="Kimmel B.E."/>
            <person name="Kodira C.D."/>
            <person name="Kraft C.L."/>
            <person name="Kravitz S."/>
            <person name="Kulp D."/>
            <person name="Lai Z."/>
            <person name="Lasko P."/>
            <person name="Lei Y."/>
            <person name="Levitsky A.A."/>
            <person name="Li J.H."/>
            <person name="Li Z."/>
            <person name="Liang Y."/>
            <person name="Lin X."/>
            <person name="Liu X."/>
            <person name="Mattei B."/>
            <person name="McIntosh T.C."/>
            <person name="McLeod M.P."/>
            <person name="McPherson D."/>
            <person name="Merkulov G."/>
            <person name="Milshina N.V."/>
            <person name="Mobarry C."/>
            <person name="Morris J."/>
            <person name="Moshrefi A."/>
            <person name="Mount S.M."/>
            <person name="Moy M."/>
            <person name="Murphy B."/>
            <person name="Murphy L."/>
            <person name="Muzny D.M."/>
            <person name="Nelson D.L."/>
            <person name="Nelson D.R."/>
            <person name="Nelson K.A."/>
            <person name="Nixon K."/>
            <person name="Nusskern D.R."/>
            <person name="Pacleb J.M."/>
            <person name="Palazzolo M."/>
            <person name="Pittman G.S."/>
            <person name="Pan S."/>
            <person name="Pollard J."/>
            <person name="Puri V."/>
            <person name="Reese M.G."/>
            <person name="Reinert K."/>
            <person name="Remington K."/>
            <person name="Saunders R.D.C."/>
            <person name="Scheeler F."/>
            <person name="Shen H."/>
            <person name="Shue B.C."/>
            <person name="Siden-Kiamos I."/>
            <person name="Simpson M."/>
            <person name="Skupski M.P."/>
            <person name="Smith T.J."/>
            <person name="Spier E."/>
            <person name="Spradling A.C."/>
            <person name="Stapleton M."/>
            <person name="Strong R."/>
            <person name="Sun E."/>
            <person name="Svirskas R."/>
            <person name="Tector C."/>
            <person name="Turner R."/>
            <person name="Venter E."/>
            <person name="Wang A.H."/>
            <person name="Wang X."/>
            <person name="Wang Z.-Y."/>
            <person name="Wassarman D.A."/>
            <person name="Weinstock G.M."/>
            <person name="Weissenbach J."/>
            <person name="Williams S.M."/>
            <person name="Woodage T."/>
            <person name="Worley K.C."/>
            <person name="Wu D."/>
            <person name="Yang S."/>
            <person name="Yao Q.A."/>
            <person name="Ye J."/>
            <person name="Yeh R.-F."/>
            <person name="Zaveri J.S."/>
            <person name="Zhan M."/>
            <person name="Zhang G."/>
            <person name="Zhao Q."/>
            <person name="Zheng L."/>
            <person name="Zheng X.H."/>
            <person name="Zhong F.N."/>
            <person name="Zhong W."/>
            <person name="Zhou X."/>
            <person name="Zhu S.C."/>
            <person name="Zhu X."/>
            <person name="Smith H.O."/>
            <person name="Gibbs R.A."/>
            <person name="Myers E.W."/>
            <person name="Rubin G.M."/>
            <person name="Venter J.C."/>
        </authorList>
    </citation>
    <scope>NUCLEOTIDE SEQUENCE [LARGE SCALE GENOMIC DNA]</scope>
    <source>
        <strain>Berkeley</strain>
    </source>
</reference>
<reference key="3">
    <citation type="journal article" date="2002" name="Genome Biol.">
        <title>Annotation of the Drosophila melanogaster euchromatic genome: a systematic review.</title>
        <authorList>
            <person name="Misra S."/>
            <person name="Crosby M.A."/>
            <person name="Mungall C.J."/>
            <person name="Matthews B.B."/>
            <person name="Campbell K.S."/>
            <person name="Hradecky P."/>
            <person name="Huang Y."/>
            <person name="Kaminker J.S."/>
            <person name="Millburn G.H."/>
            <person name="Prochnik S.E."/>
            <person name="Smith C.D."/>
            <person name="Tupy J.L."/>
            <person name="Whitfield E.J."/>
            <person name="Bayraktaroglu L."/>
            <person name="Berman B.P."/>
            <person name="Bettencourt B.R."/>
            <person name="Celniker S.E."/>
            <person name="de Grey A.D.N.J."/>
            <person name="Drysdale R.A."/>
            <person name="Harris N.L."/>
            <person name="Richter J."/>
            <person name="Russo S."/>
            <person name="Schroeder A.J."/>
            <person name="Shu S.Q."/>
            <person name="Stapleton M."/>
            <person name="Yamada C."/>
            <person name="Ashburner M."/>
            <person name="Gelbart W.M."/>
            <person name="Rubin G.M."/>
            <person name="Lewis S.E."/>
        </authorList>
    </citation>
    <scope>GENOME REANNOTATION</scope>
    <source>
        <strain>Berkeley</strain>
    </source>
</reference>
<reference key="4">
    <citation type="submission" date="2007-11" db="EMBL/GenBank/DDBJ databases">
        <authorList>
            <person name="Stapleton M."/>
            <person name="Carlson J.W."/>
            <person name="Frise E."/>
            <person name="Kapadia B."/>
            <person name="Park S."/>
            <person name="Wan K.H."/>
            <person name="Yu C."/>
            <person name="Celniker S.E."/>
        </authorList>
    </citation>
    <scope>NUCLEOTIDE SEQUENCE [LARGE SCALE MRNA]</scope>
    <source>
        <strain>Berkeley</strain>
        <tissue>Embryo</tissue>
    </source>
</reference>
<reference key="5">
    <citation type="journal article" date="2003" name="Genetics">
        <title>Natural selection drives Drosophila immune system evolution.</title>
        <authorList>
            <person name="Schlenke T.A."/>
            <person name="Begun D.J."/>
        </authorList>
    </citation>
    <scope>NUCLEOTIDE SEQUENCE [GENOMIC DNA] OF 70-1097</scope>
    <scope>VARIANTS</scope>
    <source>
        <strain>MelZim1</strain>
        <strain>MelZim3</strain>
        <strain>MelZim4</strain>
        <strain>MelZim5</strain>
        <strain>MelZim6</strain>
        <strain>MelZim7</strain>
        <strain>MelZim8</strain>
    </source>
</reference>
<reference key="6">
    <citation type="journal article" date="2002" name="Genome Biol.">
        <title>A Drosophila full-length cDNA resource.</title>
        <authorList>
            <person name="Stapleton M."/>
            <person name="Carlson J.W."/>
            <person name="Brokstein P."/>
            <person name="Yu C."/>
            <person name="Champe M."/>
            <person name="George R.A."/>
            <person name="Guarin H."/>
            <person name="Kronmiller B."/>
            <person name="Pacleb J.M."/>
            <person name="Park S."/>
            <person name="Wan K.H."/>
            <person name="Rubin G.M."/>
            <person name="Celniker S.E."/>
        </authorList>
    </citation>
    <scope>NUCLEOTIDE SEQUENCE [LARGE SCALE MRNA] OF 366-1097</scope>
    <source>
        <strain>Berkeley</strain>
        <tissue>Head</tissue>
    </source>
</reference>
<reference key="7">
    <citation type="journal article" date="1985" name="Cell">
        <title>Establishment of dorsal-ventral polarity in the Drosophila embryo: the induction of polarity by the Toll gene product.</title>
        <authorList>
            <person name="Anderson K.V."/>
            <person name="Bokla L."/>
            <person name="Nusslein-Volhard C."/>
        </authorList>
    </citation>
    <scope>FUNCTION</scope>
</reference>
<reference key="8">
    <citation type="journal article" date="1990" name="EMBO J.">
        <title>The Drosophila membrane receptor Toll can function to promote cellular adhesion.</title>
        <authorList>
            <person name="Keith F.J."/>
            <person name="Gay N.J."/>
        </authorList>
    </citation>
    <scope>FUNCTION</scope>
</reference>
<reference key="9">
    <citation type="journal article" date="1991" name="Development">
        <title>Plasma membrane localization of the Toll protein in the syncytial Drosophila embryo: importance of transmembrane signaling for dorsal-ventral pattern formation.</title>
        <authorList>
            <person name="Hashimoto C."/>
            <person name="Gerttula S."/>
            <person name="Anderson K.V."/>
        </authorList>
    </citation>
    <scope>SUBCELLULAR LOCATION</scope>
    <scope>TISSUE SPECIFICITY</scope>
    <scope>DEVELOPMENTAL STAGE</scope>
</reference>
<reference key="10">
    <citation type="journal article" date="1996" name="Cell">
        <title>The dorsoventral regulatory gene cassette spatzle/Toll/cactus controls the potent antifungal response in Drosophila adults.</title>
        <authorList>
            <person name="Lemaitre B."/>
            <person name="Nicolas E."/>
            <person name="Michaut L."/>
            <person name="Reichhart J.-M."/>
            <person name="Hoffmann J.A."/>
        </authorList>
    </citation>
    <scope>FUNCTION</scope>
</reference>
<reference key="11">
    <citation type="journal article" date="2000" name="Proc. Natl. Acad. Sci. U.S.A.">
        <title>Toll-related receptors and the control of antimicrobial peptide expression in Drosophila.</title>
        <authorList>
            <person name="Tauszig S."/>
            <person name="Jouanguy E."/>
            <person name="Hoffmann J.A."/>
            <person name="Imler J.L."/>
        </authorList>
    </citation>
    <scope>FUNCTION</scope>
    <scope>DEVELOPMENTAL STAGE</scope>
</reference>
<reference key="12">
    <citation type="journal article" date="2002" name="Gene Expr. Patterns">
        <title>Tissue and stage-specific expression of the Tolls in Drosophila embryos.</title>
        <authorList>
            <person name="Kambris Z."/>
            <person name="Hoffmann J.A."/>
            <person name="Imler J.L."/>
            <person name="Capovilla M."/>
        </authorList>
    </citation>
    <scope>DEVELOPMENTAL STAGE</scope>
</reference>
<reference key="13">
    <citation type="journal article" date="2003" name="Nat. Immunol.">
        <title>Binding of the Drosophila cytokine Spatzle to Toll is direct and establishes signaling.</title>
        <authorList>
            <person name="Weber A.N."/>
            <person name="Tauszig-Delamasure S."/>
            <person name="Hoffmann J.A."/>
            <person name="Lelievre E."/>
            <person name="Gascan H."/>
            <person name="Ray K.P."/>
            <person name="Morse M.A."/>
            <person name="Imler J.L."/>
            <person name="Gay N.J."/>
        </authorList>
    </citation>
    <scope>FUNCTION</scope>
</reference>
<reference key="14">
    <citation type="journal article" date="2004" name="J. Endotoxin Res.">
        <title>Toll and Toll-9 in Drosophila innate immune response.</title>
        <authorList>
            <person name="Bettencourt R."/>
            <person name="Tanji T."/>
            <person name="Yagi Y."/>
            <person name="Ip Y.T."/>
        </authorList>
    </citation>
    <scope>SUBCELLULAR LOCATION</scope>
</reference>
<reference key="15">
    <citation type="journal article" date="2008" name="PLoS Biol.">
        <title>Drosophila neurotrophins reveal a common mechanism for nervous system formation.</title>
        <authorList>
            <person name="Zhu B."/>
            <person name="Pennack J.A."/>
            <person name="McQuilton P."/>
            <person name="Forero M.G."/>
            <person name="Mizuguchi K."/>
            <person name="Sutcliffe B."/>
            <person name="Gu C.-J."/>
            <person name="Fenton J.C."/>
            <person name="Hidalgo A."/>
        </authorList>
    </citation>
    <scope>FUNCTION</scope>
    <scope>DEVELOPMENTAL STAGE</scope>
</reference>
<reference key="16">
    <citation type="journal article" date="2012" name="Immunity">
        <title>Virus recognition by Toll-7 activates antiviral autophagy in Drosophila.</title>
        <authorList>
            <person name="Nakamoto M."/>
            <person name="Moy R.H."/>
            <person name="Xu J."/>
            <person name="Bambina S."/>
            <person name="Yasunaga A."/>
            <person name="Shelly S.S."/>
            <person name="Gold B."/>
            <person name="Cherry S."/>
        </authorList>
    </citation>
    <scope>INDUCTION BY VIRAL INFECTION</scope>
</reference>
<reference key="17">
    <citation type="journal article" date="2010" name="Development">
        <title>Drosophila Tey represses transcription of the repulsive cue Toll and generates neuromuscular target specificity.</title>
        <authorList>
            <person name="Inaki M."/>
            <person name="Shinza-Kameda M."/>
            <person name="Ismat A."/>
            <person name="Frasch M."/>
            <person name="Nose A."/>
        </authorList>
    </citation>
    <scope>FUNCTION</scope>
    <scope>TISSUE SPECIFICITY</scope>
</reference>
<reference key="18">
    <citation type="journal article" date="2013" name="J. Appl. Crystallogr.">
        <title>Liesegang-like patterns of Toll crystals grown in gel.</title>
        <authorList>
            <person name="Gangloff M."/>
            <person name="Moreno A."/>
            <person name="Gay N.J."/>
        </authorList>
    </citation>
    <scope>X-RAY CRYSTALLOGRAPHY (3.00 ANGSTROMS) OF 28-228</scope>
    <scope>GLYCOSYLATION AT ASN-80 AND ASN-140</scope>
</reference>
<reference key="19">
    <citation type="journal article" date="2013" name="Proc. Natl. Acad. Sci. U.S.A.">
        <title>Cytokine Spatzle binds to the Drosophila immunoreceptor Toll with a neurotrophin-like specificity and couples receptor activation.</title>
        <authorList>
            <person name="Lewis M."/>
            <person name="Arnot C.J."/>
            <person name="Beeston H."/>
            <person name="McCoy A."/>
            <person name="Ashcroft A.E."/>
            <person name="Gay N.J."/>
            <person name="Gangloff M."/>
        </authorList>
    </citation>
    <scope>X-RAY CRYSTALLOGRAPHY (2.35 ANGSTROMS) OF 28-397 IN COMPLEX WITH SPZ</scope>
    <scope>SUBUNIT</scope>
    <scope>GLYCOSYLATION AT ASN-80; ASN-140; ASN-270; ASN-346 AND ASN-391</scope>
</reference>
<reference key="20">
    <citation type="journal article" date="2013" name="Structure">
        <title>Functional insights from the crystal structure of the N-terminal domain of the prototypical toll receptor.</title>
        <authorList>
            <person name="Gangloff M."/>
            <person name="Arnot C.J."/>
            <person name="Lewis M."/>
            <person name="Gay N.J."/>
        </authorList>
    </citation>
    <scope>X-RAY CRYSTALLOGRAPHY (2.4 ANGSTROMS) OF 28-228</scope>
    <scope>MUTAGENESIS OF ARG-154; LYS-208 AND ARG-432</scope>
    <scope>GLYCOSYLATION AT ASN-80; ASN-140 AND ASN-175</scope>
</reference>
<reference key="21">
    <citation type="journal article" date="2014" name="Proc. Natl. Acad. Sci. U.S.A.">
        <title>Structure of the Toll-Spatzle complex, a molecular hub in Drosophila development and innate immunity.</title>
        <authorList>
            <person name="Parthier C."/>
            <person name="Stelter M."/>
            <person name="Ursel C."/>
            <person name="Fandrich U."/>
            <person name="Lilie H."/>
            <person name="Breithaupt C."/>
            <person name="Stubbs M.T."/>
        </authorList>
    </citation>
    <scope>X-RAY CRYSTALLOGRAPHY (2.2 ANGSTROMS) OF 28-802 IN COMPLEX WITH SPZ</scope>
    <scope>SUBUNIT</scope>
    <scope>GLYCOSYLATION AT ASN-80; ASN-140; ASN-175; ASN-235; ASN-270; ASN-346; ASN-391; ASN-482; ASN-508; ASN-528; ASN-654; ASN-703 AND ASN-715</scope>
</reference>
<proteinExistence type="evidence at protein level"/>
<feature type="signal peptide" evidence="2">
    <location>
        <begin position="1"/>
        <end position="27"/>
    </location>
</feature>
<feature type="chain" id="PRO_0000034740" description="Protein toll">
    <location>
        <begin position="28"/>
        <end position="1097"/>
    </location>
</feature>
<feature type="topological domain" description="Extracellular" evidence="2">
    <location>
        <begin position="28"/>
        <end position="807"/>
    </location>
</feature>
<feature type="transmembrane region" description="Helical" evidence="2">
    <location>
        <begin position="808"/>
        <end position="828"/>
    </location>
</feature>
<feature type="topological domain" description="Cytoplasmic" evidence="2">
    <location>
        <begin position="829"/>
        <end position="1097"/>
    </location>
</feature>
<feature type="repeat" description="LRR 1">
    <location>
        <begin position="175"/>
        <end position="195"/>
    </location>
</feature>
<feature type="repeat" description="LRR 2">
    <location>
        <begin position="198"/>
        <end position="219"/>
    </location>
</feature>
<feature type="repeat" description="LRR 3">
    <location>
        <begin position="222"/>
        <end position="243"/>
    </location>
</feature>
<feature type="repeat" description="LRR 4">
    <location>
        <begin position="246"/>
        <end position="267"/>
    </location>
</feature>
<feature type="repeat" description="LRR 5">
    <location>
        <begin position="270"/>
        <end position="291"/>
    </location>
</feature>
<feature type="repeat" description="LRR 6">
    <location>
        <begin position="294"/>
        <end position="314"/>
    </location>
</feature>
<feature type="repeat" description="LRR 7">
    <location>
        <begin position="320"/>
        <end position="340"/>
    </location>
</feature>
<feature type="repeat" description="LRR 8">
    <location>
        <begin position="343"/>
        <end position="364"/>
    </location>
</feature>
<feature type="repeat" description="LRR 9">
    <location>
        <begin position="367"/>
        <end position="388"/>
    </location>
</feature>
<feature type="repeat" description="LRR 10">
    <location>
        <begin position="391"/>
        <end position="412"/>
    </location>
</feature>
<feature type="repeat" description="LRR 11">
    <location>
        <begin position="415"/>
        <end position="436"/>
    </location>
</feature>
<feature type="repeat" description="LRR 12">
    <location>
        <begin position="439"/>
        <end position="460"/>
    </location>
</feature>
<feature type="repeat" description="LRR 13">
    <location>
        <begin position="474"/>
        <end position="495"/>
    </location>
</feature>
<feature type="repeat" description="LRR 14">
    <location>
        <begin position="498"/>
        <end position="521"/>
    </location>
</feature>
<feature type="repeat" description="LRR 15">
    <location>
        <begin position="523"/>
        <end position="544"/>
    </location>
</feature>
<feature type="domain" description="LRRCT 1">
    <location>
        <begin position="561"/>
        <end position="620"/>
    </location>
</feature>
<feature type="domain" description="LRRNT">
    <location>
        <begin position="622"/>
        <end position="663"/>
    </location>
</feature>
<feature type="repeat" description="LRR 16">
    <location>
        <begin position="669"/>
        <end position="690"/>
    </location>
</feature>
<feature type="repeat" description="LRR 17">
    <location>
        <begin position="693"/>
        <end position="713"/>
    </location>
</feature>
<feature type="repeat" description="LRR 18">
    <location>
        <begin position="715"/>
        <end position="738"/>
    </location>
</feature>
<feature type="domain" description="LRRCT 2">
    <location>
        <begin position="751"/>
        <end position="801"/>
    </location>
</feature>
<feature type="domain" description="TIR" evidence="3">
    <location>
        <begin position="857"/>
        <end position="993"/>
    </location>
</feature>
<feature type="glycosylation site" description="N-linked (GlcNAc...) asparagine" evidence="13 14 15 17 23 24 25 26 27">
    <location>
        <position position="80"/>
    </location>
</feature>
<feature type="glycosylation site" description="N-linked (GlcNAc...) asparagine" evidence="13 14 15 17 23 24 25 26 27">
    <location>
        <position position="140"/>
    </location>
</feature>
<feature type="glycosylation site" description="N-linked (GlcNAc...) asparagine" evidence="13 17 23 27">
    <location>
        <position position="175"/>
    </location>
</feature>
<feature type="glycosylation site" description="N-linked (GlcNAc...) asparagine" evidence="17 27">
    <location>
        <position position="235"/>
    </location>
</feature>
<feature type="glycosylation site" description="N-linked (GlcNAc...) asparagine" evidence="15 17 25 26 27">
    <location>
        <position position="270"/>
    </location>
</feature>
<feature type="glycosylation site" description="N-linked (GlcNAc...) asparagine" evidence="2">
    <location>
        <position position="275"/>
    </location>
</feature>
<feature type="glycosylation site" description="N-linked (GlcNAc...) asparagine" evidence="15 17 25 26 27">
    <location>
        <position position="346"/>
    </location>
</feature>
<feature type="glycosylation site" description="N-linked (GlcNAc...) asparagine" evidence="15 17 25 26 27">
    <location>
        <position position="391"/>
    </location>
</feature>
<feature type="glycosylation site" description="N-linked (GlcNAc...) asparagine" evidence="17 26 27">
    <location>
        <position position="482"/>
    </location>
</feature>
<feature type="glycosylation site" description="N-linked (GlcNAc...) asparagine" evidence="17 26 27">
    <location>
        <position position="508"/>
    </location>
</feature>
<feature type="glycosylation site" description="N-linked (GlcNAc...) asparagine" evidence="17 26 27">
    <location>
        <position position="528"/>
    </location>
</feature>
<feature type="glycosylation site" description="N-linked (GlcNAc...) asparagine" evidence="17 27">
    <location>
        <position position="654"/>
    </location>
</feature>
<feature type="glycosylation site" description="N-linked (GlcNAc...) asparagine" evidence="2">
    <location>
        <position position="677"/>
    </location>
</feature>
<feature type="glycosylation site" description="N-linked (GlcNAc...) asparagine" evidence="17 26 27">
    <location>
        <position position="703"/>
    </location>
</feature>
<feature type="glycosylation site" description="N-linked (GlcNAc...) asparagine" evidence="17 26">
    <location>
        <position position="715"/>
    </location>
</feature>
<feature type="glycosylation site" description="N-linked (GlcNAc...) asparagine" evidence="2">
    <location>
        <position position="730"/>
    </location>
</feature>
<feature type="glycosylation site" description="N-linked (GlcNAc...) asparagine" evidence="2">
    <location>
        <position position="738"/>
    </location>
</feature>
<feature type="disulfide bond" evidence="23 24 26 27">
    <location>
        <begin position="34"/>
        <end position="45"/>
    </location>
</feature>
<feature type="disulfide bond" evidence="23 24 25 26 27">
    <location>
        <begin position="43"/>
        <end position="56"/>
    </location>
</feature>
<feature type="disulfide bond" evidence="23 24 25 26 27">
    <location>
        <begin position="79"/>
        <end position="107"/>
    </location>
</feature>
<feature type="disulfide bond" evidence="26 27">
    <location>
        <begin position="565"/>
        <end position="597"/>
    </location>
</feature>
<feature type="disulfide bond" evidence="26 27">
    <location>
        <begin position="567"/>
        <end position="618"/>
    </location>
</feature>
<feature type="disulfide bond" evidence="26 27">
    <location>
        <begin position="631"/>
        <end position="637"/>
    </location>
</feature>
<feature type="disulfide bond" evidence="26 27">
    <location>
        <begin position="635"/>
        <end position="650"/>
    </location>
</feature>
<feature type="disulfide bond" evidence="26 27">
    <location>
        <begin position="755"/>
        <end position="781"/>
    </location>
</feature>
<feature type="disulfide bond" evidence="26 27">
    <location>
        <begin position="757"/>
        <end position="799"/>
    </location>
</feature>
<feature type="sequence variant" description="In strain: MelZim6.">
    <original>E</original>
    <variation>G</variation>
    <location>
        <position position="98"/>
    </location>
</feature>
<feature type="sequence variant" description="In strain: MelZim7.">
    <original>G</original>
    <variation>S</variation>
    <location>
        <position position="218"/>
    </location>
</feature>
<feature type="sequence variant" description="In strain: MelZim3.">
    <original>T</original>
    <variation>S</variation>
    <location>
        <position position="245"/>
    </location>
</feature>
<feature type="sequence variant" description="In strain: MelZim3 and MelZim7.">
    <original>T</original>
    <variation>I</variation>
    <location>
        <position position="390"/>
    </location>
</feature>
<feature type="sequence variant" description="In strain: MelZim3.">
    <original>G</original>
    <variation>A</variation>
    <location>
        <position position="414"/>
    </location>
</feature>
<feature type="sequence variant" description="In strain: MelZim8.">
    <original>V</original>
    <variation>L</variation>
    <location>
        <position position="435"/>
    </location>
</feature>
<feature type="sequence variant" description="In strain: MelZim6.">
    <original>M</original>
    <variation>T</variation>
    <location>
        <position position="460"/>
    </location>
</feature>
<feature type="sequence variant" description="In strain: MelZim1, MelZim4, MelZim5 and MelZim6.">
    <original>Y</original>
    <variation>D</variation>
    <location>
        <position position="471"/>
    </location>
</feature>
<feature type="sequence variant" description="In strain: MelZim6.">
    <original>I</original>
    <variation>R</variation>
    <location>
        <position position="486"/>
    </location>
</feature>
<feature type="sequence variant" description="In strain: MelZim1, MelZim5 and MelZim6.">
    <original>G</original>
    <variation>R</variation>
    <location>
        <position position="513"/>
    </location>
</feature>
<feature type="sequence variant" description="In strain: MelZim1, MelZim5 and MelZim6.">
    <original>A</original>
    <variation>E</variation>
    <location>
        <position position="538"/>
    </location>
</feature>
<feature type="sequence variant" description="In strain: MelZim1, MelZim5 and MelZim6.">
    <original>H</original>
    <variation>Y</variation>
    <location>
        <position position="544"/>
    </location>
</feature>
<feature type="sequence variant" description="In strain: MelZim1, MelZim5 and MelZim6.">
    <original>T</original>
    <variation>M</variation>
    <location>
        <position position="568"/>
    </location>
</feature>
<feature type="sequence variant" description="In strain: MelZim6.">
    <original>T</original>
    <variation>A</variation>
    <location>
        <position position="592"/>
    </location>
</feature>
<feature type="sequence variant" description="In strain: MelZim1, MelZim5 and MelZim6.">
    <original>L</original>
    <variation>M</variation>
    <location>
        <position position="603"/>
    </location>
</feature>
<feature type="sequence variant" description="In strain: MelZim1, MelZim3, MelZim4, MelZim5, MelZim6 and MelZim7.">
    <original>L</original>
    <variation>V</variation>
    <location>
        <position position="681"/>
    </location>
</feature>
<feature type="sequence variant" description="In strain: MelZim5 and MelZim8.">
    <original>T</original>
    <variation>I</variation>
    <location>
        <position position="714"/>
    </location>
</feature>
<feature type="sequence variant" description="In strain: MelZim8.">
    <original>T</original>
    <variation>S</variation>
    <location>
        <position position="732"/>
    </location>
</feature>
<feature type="sequence variant" description="In strain: MelZim1.">
    <original>M</original>
    <variation>I</variation>
    <location>
        <position position="741"/>
    </location>
</feature>
<feature type="mutagenesis site" description="No change in signaling capacity." evidence="13">
    <original>R</original>
    <variation>A</variation>
    <location>
        <position position="154"/>
    </location>
</feature>
<feature type="mutagenesis site" description="25% decrease in signaling capacity." evidence="13">
    <original>K</original>
    <variation>E</variation>
    <location>
        <position position="208"/>
    </location>
</feature>
<feature type="mutagenesis site" description="33% decrease in signaling capacity." evidence="13">
    <original>R</original>
    <variation>A</variation>
    <location>
        <position position="432"/>
    </location>
</feature>
<feature type="sequence conflict" description="In Ref. 5; AAQ64932/AAQ64933/AAQ64934/AAQ64935/AAQ64936/AAQ64937/AAQ64938." evidence="21" ref="5">
    <original>K</original>
    <variation>S</variation>
    <location>
        <position position="355"/>
    </location>
</feature>
<feature type="sequence conflict" description="In Ref. 5; AAQ64933/AAQ64934/AAQ64937/AAQ64938." evidence="21" ref="5">
    <original>V</original>
    <variation>A</variation>
    <location>
        <position position="602"/>
    </location>
</feature>
<feature type="sequence conflict" description="In Ref. 4; ABX00775." evidence="21" ref="4">
    <original>M</original>
    <variation>I</variation>
    <location>
        <position position="786"/>
    </location>
</feature>
<feature type="sequence conflict" description="In Ref. 4; ABX00775." evidence="21" ref="4">
    <original>A</original>
    <variation>T</variation>
    <location>
        <position position="825"/>
    </location>
</feature>
<feature type="helix" evidence="30">
    <location>
        <begin position="31"/>
        <end position="36"/>
    </location>
</feature>
<feature type="turn" evidence="30">
    <location>
        <begin position="37"/>
        <end position="40"/>
    </location>
</feature>
<feature type="strand" evidence="30">
    <location>
        <begin position="42"/>
        <end position="48"/>
    </location>
</feature>
<feature type="strand" evidence="30">
    <location>
        <begin position="51"/>
        <end position="57"/>
    </location>
</feature>
<feature type="strand" evidence="30">
    <location>
        <begin position="64"/>
        <end position="70"/>
    </location>
</feature>
<feature type="strand" evidence="30">
    <location>
        <begin position="72"/>
        <end position="79"/>
    </location>
</feature>
<feature type="helix" evidence="30">
    <location>
        <begin position="84"/>
        <end position="89"/>
    </location>
</feature>
<feature type="strand" evidence="30">
    <location>
        <begin position="97"/>
        <end position="106"/>
    </location>
</feature>
<feature type="strand" evidence="28">
    <location>
        <begin position="111"/>
        <end position="113"/>
    </location>
</feature>
<feature type="helix" evidence="30">
    <location>
        <begin position="115"/>
        <end position="121"/>
    </location>
</feature>
<feature type="strand" evidence="29">
    <location>
        <begin position="124"/>
        <end position="126"/>
    </location>
</feature>
<feature type="strand" evidence="30">
    <location>
        <begin position="128"/>
        <end position="133"/>
    </location>
</feature>
<feature type="helix" evidence="30">
    <location>
        <begin position="143"/>
        <end position="146"/>
    </location>
</feature>
<feature type="strand" evidence="30">
    <location>
        <begin position="153"/>
        <end position="158"/>
    </location>
</feature>
<feature type="turn" evidence="30">
    <location>
        <begin position="167"/>
        <end position="172"/>
    </location>
</feature>
<feature type="strand" evidence="30">
    <location>
        <begin position="177"/>
        <end position="183"/>
    </location>
</feature>
<feature type="helix" evidence="30">
    <location>
        <begin position="190"/>
        <end position="193"/>
    </location>
</feature>
<feature type="strand" evidence="30">
    <location>
        <begin position="201"/>
        <end position="203"/>
    </location>
</feature>
<feature type="helix" evidence="30">
    <location>
        <begin position="217"/>
        <end position="219"/>
    </location>
</feature>
<feature type="strand" evidence="30">
    <location>
        <begin position="225"/>
        <end position="227"/>
    </location>
</feature>
<feature type="helix" evidence="30">
    <location>
        <begin position="238"/>
        <end position="241"/>
    </location>
</feature>
<feature type="strand" evidence="30">
    <location>
        <begin position="249"/>
        <end position="251"/>
    </location>
</feature>
<feature type="turn" evidence="30">
    <location>
        <begin position="262"/>
        <end position="267"/>
    </location>
</feature>
<feature type="strand" evidence="30">
    <location>
        <begin position="273"/>
        <end position="275"/>
    </location>
</feature>
<feature type="turn" evidence="30">
    <location>
        <begin position="286"/>
        <end position="291"/>
    </location>
</feature>
<feature type="strand" evidence="30">
    <location>
        <begin position="297"/>
        <end position="300"/>
    </location>
</feature>
<feature type="turn" evidence="30">
    <location>
        <begin position="312"/>
        <end position="315"/>
    </location>
</feature>
<feature type="strand" evidence="30">
    <location>
        <begin position="323"/>
        <end position="326"/>
    </location>
</feature>
<feature type="turn" evidence="30">
    <location>
        <begin position="335"/>
        <end position="340"/>
    </location>
</feature>
<feature type="strand" evidence="30">
    <location>
        <begin position="346"/>
        <end position="348"/>
    </location>
</feature>
<feature type="turn" evidence="30">
    <location>
        <begin position="359"/>
        <end position="364"/>
    </location>
</feature>
<feature type="strand" evidence="30">
    <location>
        <begin position="370"/>
        <end position="372"/>
    </location>
</feature>
<feature type="turn" evidence="30">
    <location>
        <begin position="383"/>
        <end position="386"/>
    </location>
</feature>
<feature type="strand" evidence="30">
    <location>
        <begin position="394"/>
        <end position="396"/>
    </location>
</feature>
<feature type="turn" evidence="30">
    <location>
        <begin position="409"/>
        <end position="412"/>
    </location>
</feature>
<feature type="strand" evidence="30">
    <location>
        <begin position="418"/>
        <end position="420"/>
    </location>
</feature>
<feature type="turn" evidence="30">
    <location>
        <begin position="431"/>
        <end position="434"/>
    </location>
</feature>
<feature type="strand" evidence="30">
    <location>
        <begin position="442"/>
        <end position="444"/>
    </location>
</feature>
<feature type="helix" evidence="30">
    <location>
        <begin position="456"/>
        <end position="460"/>
    </location>
</feature>
<feature type="helix" evidence="30">
    <location>
        <begin position="468"/>
        <end position="471"/>
    </location>
</feature>
<feature type="strand" evidence="30">
    <location>
        <begin position="477"/>
        <end position="479"/>
    </location>
</feature>
<feature type="helix" evidence="30">
    <location>
        <begin position="490"/>
        <end position="494"/>
    </location>
</feature>
<feature type="strand" evidence="30">
    <location>
        <begin position="501"/>
        <end position="503"/>
    </location>
</feature>
<feature type="strand" evidence="31">
    <location>
        <begin position="511"/>
        <end position="513"/>
    </location>
</feature>
<feature type="helix" evidence="30">
    <location>
        <begin position="514"/>
        <end position="517"/>
    </location>
</feature>
<feature type="strand" evidence="30">
    <location>
        <begin position="526"/>
        <end position="528"/>
    </location>
</feature>
<feature type="strand" evidence="31">
    <location>
        <begin position="536"/>
        <end position="538"/>
    </location>
</feature>
<feature type="strand" evidence="30">
    <location>
        <begin position="554"/>
        <end position="557"/>
    </location>
</feature>
<feature type="helix" evidence="30">
    <location>
        <begin position="567"/>
        <end position="569"/>
    </location>
</feature>
<feature type="helix" evidence="30">
    <location>
        <begin position="570"/>
        <end position="576"/>
    </location>
</feature>
<feature type="strand" evidence="30">
    <location>
        <begin position="577"/>
        <end position="579"/>
    </location>
</feature>
<feature type="helix" evidence="30">
    <location>
        <begin position="584"/>
        <end position="586"/>
    </location>
</feature>
<feature type="strand" evidence="30">
    <location>
        <begin position="588"/>
        <end position="591"/>
    </location>
</feature>
<feature type="strand" evidence="30">
    <location>
        <begin position="596"/>
        <end position="600"/>
    </location>
</feature>
<feature type="turn" evidence="30">
    <location>
        <begin position="601"/>
        <end position="605"/>
    </location>
</feature>
<feature type="helix" evidence="30">
    <location>
        <begin position="608"/>
        <end position="610"/>
    </location>
</feature>
<feature type="helix" evidence="30">
    <location>
        <begin position="613"/>
        <end position="615"/>
    </location>
</feature>
<feature type="strand" evidence="30">
    <location>
        <begin position="617"/>
        <end position="619"/>
    </location>
</feature>
<feature type="strand" evidence="30">
    <location>
        <begin position="636"/>
        <end position="640"/>
    </location>
</feature>
<feature type="turn" evidence="30">
    <location>
        <begin position="641"/>
        <end position="644"/>
    </location>
</feature>
<feature type="strand" evidence="30">
    <location>
        <begin position="645"/>
        <end position="649"/>
    </location>
</feature>
<feature type="strand" evidence="30">
    <location>
        <begin position="670"/>
        <end position="674"/>
    </location>
</feature>
<feature type="helix" evidence="30">
    <location>
        <begin position="691"/>
        <end position="693"/>
    </location>
</feature>
<feature type="strand" evidence="30">
    <location>
        <begin position="695"/>
        <end position="698"/>
    </location>
</feature>
<feature type="helix" evidence="30">
    <location>
        <begin position="709"/>
        <end position="711"/>
    </location>
</feature>
<feature type="strand" evidence="30">
    <location>
        <begin position="718"/>
        <end position="720"/>
    </location>
</feature>
<feature type="strand" evidence="31">
    <location>
        <begin position="723"/>
        <end position="725"/>
    </location>
</feature>
<feature type="helix" evidence="30">
    <location>
        <begin position="731"/>
        <end position="737"/>
    </location>
</feature>
<feature type="strand" evidence="30">
    <location>
        <begin position="745"/>
        <end position="747"/>
    </location>
</feature>
<feature type="helix" evidence="30">
    <location>
        <begin position="757"/>
        <end position="759"/>
    </location>
</feature>
<feature type="helix" evidence="30">
    <location>
        <begin position="760"/>
        <end position="767"/>
    </location>
</feature>
<feature type="turn" evidence="30">
    <location>
        <begin position="770"/>
        <end position="772"/>
    </location>
</feature>
<feature type="helix" evidence="30">
    <location>
        <begin position="776"/>
        <end position="778"/>
    </location>
</feature>
<feature type="helix" evidence="30">
    <location>
        <begin position="790"/>
        <end position="792"/>
    </location>
</feature>
<feature type="helix" evidence="30">
    <location>
        <begin position="795"/>
        <end position="798"/>
    </location>
</feature>
<gene>
    <name evidence="22" type="primary">Tl</name>
    <name evidence="22" type="ORF">CG5490</name>
</gene>
<evidence type="ECO:0000250" key="1">
    <source>
        <dbReference type="UniProtKB" id="O00206"/>
    </source>
</evidence>
<evidence type="ECO:0000255" key="2"/>
<evidence type="ECO:0000255" key="3">
    <source>
        <dbReference type="PROSITE-ProRule" id="PRU00204"/>
    </source>
</evidence>
<evidence type="ECO:0000269" key="4">
    <source>
    </source>
</evidence>
<evidence type="ECO:0000269" key="5">
    <source>
    </source>
</evidence>
<evidence type="ECO:0000269" key="6">
    <source>
    </source>
</evidence>
<evidence type="ECO:0000269" key="7">
    <source>
    </source>
</evidence>
<evidence type="ECO:0000269" key="8">
    <source>
    </source>
</evidence>
<evidence type="ECO:0000269" key="9">
    <source>
    </source>
</evidence>
<evidence type="ECO:0000269" key="10">
    <source>
    </source>
</evidence>
<evidence type="ECO:0000269" key="11">
    <source>
    </source>
</evidence>
<evidence type="ECO:0000269" key="12">
    <source>
    </source>
</evidence>
<evidence type="ECO:0000269" key="13">
    <source>
    </source>
</evidence>
<evidence type="ECO:0000269" key="14">
    <source>
    </source>
</evidence>
<evidence type="ECO:0000269" key="15">
    <source>
    </source>
</evidence>
<evidence type="ECO:0000269" key="16">
    <source>
    </source>
</evidence>
<evidence type="ECO:0000269" key="17">
    <source>
    </source>
</evidence>
<evidence type="ECO:0000269" key="18">
    <source>
    </source>
</evidence>
<evidence type="ECO:0000269" key="19">
    <source>
    </source>
</evidence>
<evidence type="ECO:0000303" key="20">
    <source>
    </source>
</evidence>
<evidence type="ECO:0000305" key="21"/>
<evidence type="ECO:0000312" key="22">
    <source>
        <dbReference type="FlyBase" id="FBgn0262473"/>
    </source>
</evidence>
<evidence type="ECO:0007744" key="23">
    <source>
        <dbReference type="PDB" id="4ARN"/>
    </source>
</evidence>
<evidence type="ECO:0007744" key="24">
    <source>
        <dbReference type="PDB" id="4ARR"/>
    </source>
</evidence>
<evidence type="ECO:0007744" key="25">
    <source>
        <dbReference type="PDB" id="4BV4"/>
    </source>
</evidence>
<evidence type="ECO:0007744" key="26">
    <source>
        <dbReference type="PDB" id="4LXR"/>
    </source>
</evidence>
<evidence type="ECO:0007744" key="27">
    <source>
        <dbReference type="PDB" id="4LXS"/>
    </source>
</evidence>
<evidence type="ECO:0007829" key="28">
    <source>
        <dbReference type="PDB" id="4ARN"/>
    </source>
</evidence>
<evidence type="ECO:0007829" key="29">
    <source>
        <dbReference type="PDB" id="4ARR"/>
    </source>
</evidence>
<evidence type="ECO:0007829" key="30">
    <source>
        <dbReference type="PDB" id="4LXR"/>
    </source>
</evidence>
<evidence type="ECO:0007829" key="31">
    <source>
        <dbReference type="PDB" id="4LXS"/>
    </source>
</evidence>
<comment type="function">
    <text evidence="4 6 9 10 11 18 19">Receptor for the cleaved activated form of spz, spaetzle C-106 (PubMed:12872120). Binding to spaetzle C-106 activates the Toll signaling pathway and induces expression of the antifungal peptide drosomycin (PubMed:10973475, PubMed:12872120, PubMed:8808632). Component of the extracellular signaling pathway that establishes dorsal-ventral polarity in the embryo (PubMed:3931919). Promotes heterophilic cellular adhesion (PubMed:2124970). Involved in synaptic targeting of motoneurons RP5 and V to muscle 12 (M12); functions as a repulsive cue inhibiting motoneuron synapse formation on muscle 13 (M13) to guide RP5 and V to the neighboring M12, where its expression is repressed by tey (PubMed:20504957). May also function in embryonic neuronal survival and the synaptic targeting of SNa motoneurons (PubMed:19018662).</text>
</comment>
<comment type="subunit">
    <text evidence="6 15 17 20">In the absence of ligand, forms a low-affinity disulfide-linked homodimer (PubMed:24733933). In the presence of ligand, crystal structures show one Tl molecule bound to a spaetzle C-106 homodimer (PubMed:24282309, PubMed:24733933). However, the active complex probably consists of two Tl molecules bound to a spaetzle C-106 homodimer (PubMed:24282309, PubMed:24733933). This is supported by in vitro experiments which also show binding of the spaetzle C-106 dimer to 2 Tl receptors (PubMed:12872120). Ligand binding induces conformational changes in the extracellular domain of Tl (PubMed:24282309). This may enable a secondary homodimerization interface at the C-terminus of the Tl extracellular domain (PubMed:24282309).</text>
</comment>
<comment type="interaction">
    <interactant intactId="EBI-143610">
        <id>P08953</id>
    </interactant>
    <interactant intactId="EBI-129988">
        <id>Q7K105</id>
        <label>Myd88</label>
    </interactant>
    <organismsDiffer>false</organismsDiffer>
    <experiments>3</experiments>
</comment>
<comment type="interaction">
    <interactant intactId="EBI-143610">
        <id>P08953</id>
    </interactant>
    <interactant intactId="EBI-143610">
        <id>P08953</id>
        <label>Tl</label>
    </interactant>
    <organismsDiffer>false</organismsDiffer>
    <experiments>2</experiments>
</comment>
<comment type="subcellular location">
    <subcellularLocation>
        <location evidence="7 8">Cell membrane</location>
        <topology evidence="2">Single-pass type I membrane protein</topology>
    </subcellularLocation>
    <subcellularLocation>
        <location evidence="7">Cytoplasm</location>
    </subcellularLocation>
    <text evidence="7">In the fat body, detected in puntate structures along the cell periphery. Becomes evenly distributed in the cytoplasm 1 hour after bacterial infection.</text>
</comment>
<comment type="tissue specificity">
    <text evidence="8 10">In early embryos, concentrated in the pseudocleavage furrows that form transiently between nuclei before cellularization and in the cleavage furrows during cellularization (at protein level) (PubMed:1879347). Later, found on cells in the mesectoderm, stomodeum, proctodeum, anterior and posterior midguts, splanchnopleura, salivary gland placode and adjacent to the segmentally repeated tracheal placodes (at protein level) (PubMed:1879347). During and after germ band shortening, localized in a number of cell types, including the salivary gland, foregut, hindgut, Malpighian tubules and epidermis (at protein level) (PubMed:1879347). In embryos, high expression in M13 with comparatively low expression in M12 (PubMed:20504957).</text>
</comment>
<comment type="developmental stage">
    <text evidence="4 5 8 9 16">Expressed both maternally and zygotically (PubMed:12617819, PubMed:1879347, PubMed:2449285). Maternal Tl increases in syncytial embryos, reaching a peak at the syncytial blastoderm stage and then decreases and is almost undetectable by the time of ventral furrow formation at gastrulation (at protein level) (PubMed:1879347). Expressed throughout development, with highest levels of expression in the embryo (PubMed:10973475). Expressed in all embryonic central nervous system axons (PubMed:19018662). In larvae, detected in the blood cells and fat body (PubMed:12617819).</text>
</comment>
<comment type="induction">
    <text evidence="12">Up-regulated during vesicular stomatitis virus (VSV) infection.</text>
</comment>
<comment type="similarity">
    <text evidence="21">Belongs to the Toll-like receptor family.</text>
</comment>
<comment type="caution">
    <text evidence="1 21">In some plant proteins and in human SARM1, the TIR domain has NAD(+) hydrolase (NADase) activity (By similarity). However, despite the presence of the catalytic Asp residue, the isolated TIR domain of human TLR4 lacks NADase activity (By similarity). Based on this, it is unlikely that Toll-like receptors have NADase activity.</text>
</comment>
<accession>P08953</accession>
<accession>A4V3G7</accession>
<accession>A8WHK7</accession>
<accession>Q8MRF3</accession>
<accession>Q9VBB8</accession>
<sequence>MSRLKAASELALLVIILQLLQWPGSEASFGRDACSEMSIDGLCQCAPIMSEYEIICPANAENPTFRLTIQPKDYVQIMCNLTDTTDYQQLPKKLRIGEVDRVQMRRCMLPGHTPIASILDYLGIVSPTTLIFESDNLGMNITRQHLDRLHGLKRFRFTTRRLTHIPANLLTDMRNLSHLELRANIEEMPSHLFDDLENLESIEFGSNKLRQMPRGIFGKMPKLKQLNLWSNQLHNLTKHDFEGATSVLGIDIHDNGIEQLPHDVFAHLTNVTDINLSANLFRSLPQGLFDHNKHLNEVRLMNNRVPLATLPSRLFANQPELQILRLRAELQSLPGDLFEHSTQITNISLGDNLLKTLPATLLEHQVNLLSLDLSNNRLTHLPDSLFAHTTNLTDLRLEDNLLTGISGDIFSNLGNLVTLVMSRNRLRTIDSRAFVSTNGLRHLHLDHNDIDLQQPLLDIMLQTQINSPFGYMHGLLTLNLRNNSIIFVYNDWKNTMLQLRELDLSYNNISSLGYEDLAFLSQNRLHVNMTHNKIRRIALPEDVHLGEGYNNNLVHVDLNDNPLVCDCTILWFIQLVRGVHKPQYSRQFKLRTDRLVCSQPNVLEGTPVRQIEPQTLICPLDFSDDPRERKCPRGCNCHVRTYDKALVINCHSGNLTHVPRLPNLHKNMQLMELHLENNTLLRLPSANTPGYESVTSLHLAGNNLTSIDVDQLPTNLTHLDISWNHLQMLNATVLGFLNRTMKWRSVKLSGNPWMCDCTAKPLLLFTQDNFERIGDRNEMMCVNAEMPTRMVELSTNDICPAEKGVFIALAVVIALTGLLAGFTAALYYKFQTEIKIWLYAHNLLLWFVTEEDLDKDKKFDAFISYSHKDQSFIEDYLVPQLEHGPQKFQLCVHERDWLVGGHIPENIMRSVADSRRTIIVLSQNFIKSEWARLEFRAAHRSALNEGRSRIIVIIYSDIGDVEKLDEELKAYLKMNTYLKWGDPWFWDKLRFALPHRRPVGNIGNGALIKTALKGSTDDKLELIKPSPVTPPLTTPPAEATKNPLVAQLNGVTPHQAIMIANGKNGLTNLYTPNGKSHGNGHINGAFIINTNAKQSDV</sequence>